<proteinExistence type="inferred from homology"/>
<feature type="chain" id="PRO_1000056934" description="Cytochrome b559 subunit alpha">
    <location>
        <begin position="1"/>
        <end position="82"/>
    </location>
</feature>
<feature type="transmembrane region" description="Helical" evidence="1">
    <location>
        <begin position="22"/>
        <end position="36"/>
    </location>
</feature>
<feature type="binding site" description="axial binding residue" evidence="1">
    <location>
        <position position="24"/>
    </location>
    <ligand>
        <name>heme</name>
        <dbReference type="ChEBI" id="CHEBI:30413"/>
        <note>ligand shared with beta subunit</note>
    </ligand>
    <ligandPart>
        <name>Fe</name>
        <dbReference type="ChEBI" id="CHEBI:18248"/>
    </ligandPart>
</feature>
<accession>Q0IDJ7</accession>
<keyword id="KW-0249">Electron transport</keyword>
<keyword id="KW-0349">Heme</keyword>
<keyword id="KW-0408">Iron</keyword>
<keyword id="KW-0472">Membrane</keyword>
<keyword id="KW-0479">Metal-binding</keyword>
<keyword id="KW-0602">Photosynthesis</keyword>
<keyword id="KW-0604">Photosystem II</keyword>
<keyword id="KW-1185">Reference proteome</keyword>
<keyword id="KW-0793">Thylakoid</keyword>
<keyword id="KW-0812">Transmembrane</keyword>
<keyword id="KW-1133">Transmembrane helix</keyword>
<keyword id="KW-0813">Transport</keyword>
<comment type="function">
    <text evidence="1">This b-type cytochrome is tightly associated with the reaction center of photosystem II (PSII). PSII is a light-driven water:plastoquinone oxidoreductase that uses light energy to abstract electrons from H(2)O, generating O(2) and a proton gradient subsequently used for ATP formation. It consists of a core antenna complex that captures photons, and an electron transfer chain that converts photonic excitation into a charge separation.</text>
</comment>
<comment type="cofactor">
    <cofactor evidence="1">
        <name>heme b</name>
        <dbReference type="ChEBI" id="CHEBI:60344"/>
    </cofactor>
    <text evidence="1">With its partner (PsbF) binds heme. PSII binds additional chlorophylls, carotenoids and specific lipids.</text>
</comment>
<comment type="subunit">
    <text evidence="1">Heterodimer of an alpha subunit and a beta subunit. PSII is composed of 1 copy each of membrane proteins PsbA, PsbB, PsbC, PsbD, PsbE, PsbF, PsbH, PsbI, PsbJ, PsbK, PsbL, PsbM, PsbT, PsbX, PsbY, PsbZ, Psb30/Ycf12, peripheral proteins PsbO, CyanoQ (PsbQ), PsbU, PsbV and a large number of cofactors. It forms dimeric complexes.</text>
</comment>
<comment type="subcellular location">
    <subcellularLocation>
        <location evidence="1">Cellular thylakoid membrane</location>
        <topology evidence="1">Single-pass membrane protein</topology>
    </subcellularLocation>
</comment>
<comment type="similarity">
    <text evidence="1">Belongs to the PsbE/PsbF family.</text>
</comment>
<organism>
    <name type="scientific">Synechococcus sp. (strain CC9311)</name>
    <dbReference type="NCBI Taxonomy" id="64471"/>
    <lineage>
        <taxon>Bacteria</taxon>
        <taxon>Bacillati</taxon>
        <taxon>Cyanobacteriota</taxon>
        <taxon>Cyanophyceae</taxon>
        <taxon>Synechococcales</taxon>
        <taxon>Synechococcaceae</taxon>
        <taxon>Synechococcus</taxon>
    </lineage>
</organism>
<gene>
    <name evidence="1" type="primary">psbE</name>
    <name type="ordered locus">sync_0239</name>
</gene>
<name>PSBE_SYNS3</name>
<evidence type="ECO:0000255" key="1">
    <source>
        <dbReference type="HAMAP-Rule" id="MF_00642"/>
    </source>
</evidence>
<reference key="1">
    <citation type="journal article" date="2006" name="Proc. Natl. Acad. Sci. U.S.A.">
        <title>Genome sequence of Synechococcus CC9311: insights into adaptation to a coastal environment.</title>
        <authorList>
            <person name="Palenik B."/>
            <person name="Ren Q."/>
            <person name="Dupont C.L."/>
            <person name="Myers G.S."/>
            <person name="Heidelberg J.F."/>
            <person name="Badger J.H."/>
            <person name="Madupu R."/>
            <person name="Nelson W.C."/>
            <person name="Brinkac L.M."/>
            <person name="Dodson R.J."/>
            <person name="Durkin A.S."/>
            <person name="Daugherty S.C."/>
            <person name="Sullivan S.A."/>
            <person name="Khouri H."/>
            <person name="Mohamoud Y."/>
            <person name="Halpin R."/>
            <person name="Paulsen I.T."/>
        </authorList>
    </citation>
    <scope>NUCLEOTIDE SEQUENCE [LARGE SCALE GENOMIC DNA]</scope>
    <source>
        <strain>CC9311</strain>
    </source>
</reference>
<dbReference type="EMBL" id="CP000435">
    <property type="protein sequence ID" value="ABI46397.1"/>
    <property type="molecule type" value="Genomic_DNA"/>
</dbReference>
<dbReference type="RefSeq" id="WP_006853744.1">
    <property type="nucleotide sequence ID" value="NC_008319.1"/>
</dbReference>
<dbReference type="SMR" id="Q0IDJ7"/>
<dbReference type="STRING" id="64471.sync_0239"/>
<dbReference type="KEGG" id="syg:sync_0239"/>
<dbReference type="eggNOG" id="ENOG5032GCS">
    <property type="taxonomic scope" value="Bacteria"/>
</dbReference>
<dbReference type="HOGENOM" id="CLU_194095_0_0_3"/>
<dbReference type="OrthoDB" id="514620at2"/>
<dbReference type="Proteomes" id="UP000001961">
    <property type="component" value="Chromosome"/>
</dbReference>
<dbReference type="GO" id="GO:0009523">
    <property type="term" value="C:photosystem II"/>
    <property type="evidence" value="ECO:0007669"/>
    <property type="project" value="UniProtKB-KW"/>
</dbReference>
<dbReference type="GO" id="GO:0031676">
    <property type="term" value="C:plasma membrane-derived thylakoid membrane"/>
    <property type="evidence" value="ECO:0007669"/>
    <property type="project" value="UniProtKB-SubCell"/>
</dbReference>
<dbReference type="GO" id="GO:0009055">
    <property type="term" value="F:electron transfer activity"/>
    <property type="evidence" value="ECO:0007669"/>
    <property type="project" value="UniProtKB-UniRule"/>
</dbReference>
<dbReference type="GO" id="GO:0020037">
    <property type="term" value="F:heme binding"/>
    <property type="evidence" value="ECO:0007669"/>
    <property type="project" value="InterPro"/>
</dbReference>
<dbReference type="GO" id="GO:0005506">
    <property type="term" value="F:iron ion binding"/>
    <property type="evidence" value="ECO:0007669"/>
    <property type="project" value="UniProtKB-UniRule"/>
</dbReference>
<dbReference type="GO" id="GO:0009767">
    <property type="term" value="P:photosynthetic electron transport chain"/>
    <property type="evidence" value="ECO:0007669"/>
    <property type="project" value="InterPro"/>
</dbReference>
<dbReference type="Gene3D" id="1.20.5.860">
    <property type="entry name" value="Photosystem II cytochrome b559, alpha subunit"/>
    <property type="match status" value="1"/>
</dbReference>
<dbReference type="HAMAP" id="MF_00642">
    <property type="entry name" value="PSII_PsbE"/>
    <property type="match status" value="1"/>
</dbReference>
<dbReference type="InterPro" id="IPR006217">
    <property type="entry name" value="PSII_cyt_b559_asu"/>
</dbReference>
<dbReference type="InterPro" id="IPR037025">
    <property type="entry name" value="PSII_cyt_b559_asu_sf"/>
</dbReference>
<dbReference type="InterPro" id="IPR013081">
    <property type="entry name" value="PSII_cyt_b559_N"/>
</dbReference>
<dbReference type="InterPro" id="IPR013082">
    <property type="entry name" value="PSII_cytb559_asu_lum"/>
</dbReference>
<dbReference type="NCBIfam" id="TIGR01332">
    <property type="entry name" value="cyt_b559_alpha"/>
    <property type="match status" value="1"/>
</dbReference>
<dbReference type="PANTHER" id="PTHR33391">
    <property type="entry name" value="CYTOCHROME B559 SUBUNIT BETA-RELATED"/>
    <property type="match status" value="1"/>
</dbReference>
<dbReference type="PANTHER" id="PTHR33391:SF9">
    <property type="entry name" value="CYTOCHROME B559 SUBUNIT BETA-RELATED"/>
    <property type="match status" value="1"/>
</dbReference>
<dbReference type="Pfam" id="PF00283">
    <property type="entry name" value="Cytochrom_B559"/>
    <property type="match status" value="1"/>
</dbReference>
<dbReference type="Pfam" id="PF00284">
    <property type="entry name" value="Cytochrom_B559a"/>
    <property type="match status" value="1"/>
</dbReference>
<dbReference type="PIRSF" id="PIRSF000036">
    <property type="entry name" value="PsbE"/>
    <property type="match status" value="1"/>
</dbReference>
<dbReference type="SUPFAM" id="SSF161045">
    <property type="entry name" value="Cytochrome b559 subunits"/>
    <property type="match status" value="1"/>
</dbReference>
<protein>
    <recommendedName>
        <fullName evidence="1">Cytochrome b559 subunit alpha</fullName>
    </recommendedName>
    <alternativeName>
        <fullName evidence="1">PSII reaction center subunit V</fullName>
    </alternativeName>
</protein>
<sequence length="82" mass="9105">MAAGSTGERPFFEIITSIRYWVIHAITLPSIFLAGFLFVSTGLAYDAFGTPRPDAYFQASESKAPVVSQRYEGKSELDLRLK</sequence>